<comment type="function">
    <text evidence="2">Long-chain acyl-CoA thioesterase that could be involved in beta-oxidation of fatty acids (PubMed:18576672). Is most active with 3,5-tetradecadienoyl-CoA, a metabolite of oleic acid that is hydrolyzed during oleate beta-oxidation, but can also use other substrates such as 3,5-dodecadienoyl-CoA, 9-cis-octadecenoyl-CoA, octadecanoyl-CoA, hexadecanoyl-CoA, 3-hydroxytetradecanoyl-CoA and tetradecanoyl-CoA (PubMed:18576672).</text>
</comment>
<comment type="catalytic activity">
    <reaction evidence="2">
        <text>(3E,5Z)-tetradecadienoyl-CoA + H2O = (3E,5Z)-tetradecadienoate + CoA + H(+)</text>
        <dbReference type="Rhea" id="RHEA:55044"/>
        <dbReference type="ChEBI" id="CHEBI:15377"/>
        <dbReference type="ChEBI" id="CHEBI:15378"/>
        <dbReference type="ChEBI" id="CHEBI:57287"/>
        <dbReference type="ChEBI" id="CHEBI:71586"/>
        <dbReference type="ChEBI" id="CHEBI:71590"/>
    </reaction>
    <physiologicalReaction direction="left-to-right" evidence="2">
        <dbReference type="Rhea" id="RHEA:55045"/>
    </physiologicalReaction>
</comment>
<comment type="catalytic activity">
    <reaction evidence="2">
        <text>(3E,5Z)-dodecadienoyl-CoA + H2O = (3E,5Z)-dodecadienoate + CoA + H(+)</text>
        <dbReference type="Rhea" id="RHEA:55048"/>
        <dbReference type="ChEBI" id="CHEBI:15377"/>
        <dbReference type="ChEBI" id="CHEBI:15378"/>
        <dbReference type="ChEBI" id="CHEBI:57287"/>
        <dbReference type="ChEBI" id="CHEBI:138558"/>
        <dbReference type="ChEBI" id="CHEBI:138569"/>
    </reaction>
    <physiologicalReaction direction="left-to-right" evidence="2">
        <dbReference type="Rhea" id="RHEA:55049"/>
    </physiologicalReaction>
</comment>
<comment type="catalytic activity">
    <reaction evidence="2">
        <text>(9Z)-octadecenoyl-CoA + H2O = (9Z)-octadecenoate + CoA + H(+)</text>
        <dbReference type="Rhea" id="RHEA:40139"/>
        <dbReference type="ChEBI" id="CHEBI:15377"/>
        <dbReference type="ChEBI" id="CHEBI:15378"/>
        <dbReference type="ChEBI" id="CHEBI:30823"/>
        <dbReference type="ChEBI" id="CHEBI:57287"/>
        <dbReference type="ChEBI" id="CHEBI:57387"/>
    </reaction>
    <physiologicalReaction direction="left-to-right" evidence="2">
        <dbReference type="Rhea" id="RHEA:40140"/>
    </physiologicalReaction>
</comment>
<comment type="catalytic activity">
    <reaction evidence="2">
        <text>octadecanoyl-CoA + H2O = octadecanoate + CoA + H(+)</text>
        <dbReference type="Rhea" id="RHEA:30139"/>
        <dbReference type="ChEBI" id="CHEBI:15377"/>
        <dbReference type="ChEBI" id="CHEBI:15378"/>
        <dbReference type="ChEBI" id="CHEBI:25629"/>
        <dbReference type="ChEBI" id="CHEBI:57287"/>
        <dbReference type="ChEBI" id="CHEBI:57394"/>
    </reaction>
    <physiologicalReaction direction="left-to-right" evidence="2">
        <dbReference type="Rhea" id="RHEA:30140"/>
    </physiologicalReaction>
</comment>
<comment type="catalytic activity">
    <reaction evidence="2">
        <text>hexadecanoyl-CoA + H2O = hexadecanoate + CoA + H(+)</text>
        <dbReference type="Rhea" id="RHEA:16645"/>
        <dbReference type="ChEBI" id="CHEBI:7896"/>
        <dbReference type="ChEBI" id="CHEBI:15377"/>
        <dbReference type="ChEBI" id="CHEBI:15378"/>
        <dbReference type="ChEBI" id="CHEBI:57287"/>
        <dbReference type="ChEBI" id="CHEBI:57379"/>
    </reaction>
    <physiologicalReaction direction="left-to-right" evidence="2">
        <dbReference type="Rhea" id="RHEA:16646"/>
    </physiologicalReaction>
</comment>
<comment type="catalytic activity">
    <reaction evidence="2">
        <text>(3S)-hydroxytetradecanoyl-CoA + H2O = (3S)-hydroxytetradecanoate + CoA + H(+)</text>
        <dbReference type="Rhea" id="RHEA:54976"/>
        <dbReference type="ChEBI" id="CHEBI:15377"/>
        <dbReference type="ChEBI" id="CHEBI:15378"/>
        <dbReference type="ChEBI" id="CHEBI:57287"/>
        <dbReference type="ChEBI" id="CHEBI:62614"/>
        <dbReference type="ChEBI" id="CHEBI:138437"/>
    </reaction>
    <physiologicalReaction direction="left-to-right" evidence="2">
        <dbReference type="Rhea" id="RHEA:54977"/>
    </physiologicalReaction>
</comment>
<comment type="catalytic activity">
    <reaction evidence="2">
        <text>tetradecanoyl-CoA + H2O = tetradecanoate + CoA + H(+)</text>
        <dbReference type="Rhea" id="RHEA:40119"/>
        <dbReference type="ChEBI" id="CHEBI:15377"/>
        <dbReference type="ChEBI" id="CHEBI:15378"/>
        <dbReference type="ChEBI" id="CHEBI:30807"/>
        <dbReference type="ChEBI" id="CHEBI:57287"/>
        <dbReference type="ChEBI" id="CHEBI:57385"/>
    </reaction>
    <physiologicalReaction direction="left-to-right" evidence="2">
        <dbReference type="Rhea" id="RHEA:40120"/>
    </physiologicalReaction>
</comment>
<comment type="biophysicochemical properties">
    <kinetics>
        <KM evidence="2">3 uM for 3,5-cis-tetradecadienoyl-CoA</KM>
        <KM evidence="2">10.8 uM for 3,5-cis-dodecadienoyl-CoA</KM>
        <KM evidence="2">5.8 uM for 3-hydroxytetradecanoyl-CoA</KM>
        <KM evidence="2">6 uM for hexadecanoyl-CoA</KM>
        <KM evidence="2">6.3 uM for tetradecanoyl-CoA</KM>
        <KM evidence="2">13 uM for lauroyl-CoA</KM>
        <Vmax evidence="2">101.3 umol/min/mg enzyme with 3,5-cis-tetradecadienoyl-CoA as substrate</Vmax>
        <Vmax evidence="2">92.3 umol/min/mg enzyme with 3,5-cis-dodecadienoyl-CoA as substrate</Vmax>
        <Vmax evidence="2">45.5 umol/min/mg enzyme with 3-hydroxytetradecanoyl-CoA as substrate</Vmax>
        <Vmax evidence="2">43.5 umol/min/mg enzyme with hexadecanoyl-CoA as substrate</Vmax>
        <Vmax evidence="2">26.4 umol/min/mg enzyme with tetradecanoyl-CoA as substrate</Vmax>
        <Vmax evidence="2">6.9 umol/min/mg enzyme with lauroyl-CoA as substrate</Vmax>
    </kinetics>
</comment>
<comment type="subunit">
    <text evidence="6">Homotetramer.</text>
</comment>
<comment type="induction">
    <text evidence="2 3">Up-regulated by growth on oleic acid. Repressed by FadR and by the cyclic AMP receptor protein-cAMP (CRP-cAMP) complex.</text>
</comment>
<comment type="similarity">
    <text evidence="6">Belongs to the 4-hydroxybenzoyl-CoA thioesterase family.</text>
</comment>
<feature type="chain" id="PRO_0000168630" description="Long-chain acyl-CoA thioesterase FadM">
    <location>
        <begin position="1"/>
        <end position="132"/>
    </location>
</feature>
<feature type="active site" evidence="1">
    <location>
        <position position="13"/>
    </location>
</feature>
<feature type="strand" evidence="7">
    <location>
        <begin position="1"/>
        <end position="6"/>
    </location>
</feature>
<feature type="helix" evidence="7">
    <location>
        <begin position="9"/>
        <end position="11"/>
    </location>
</feature>
<feature type="strand" evidence="7">
    <location>
        <begin position="16"/>
        <end position="18"/>
    </location>
</feature>
<feature type="helix" evidence="7">
    <location>
        <begin position="20"/>
        <end position="36"/>
    </location>
</feature>
<feature type="helix" evidence="7">
    <location>
        <begin position="39"/>
        <end position="46"/>
    </location>
</feature>
<feature type="strand" evidence="7">
    <location>
        <begin position="49"/>
        <end position="60"/>
    </location>
</feature>
<feature type="strand" evidence="7">
    <location>
        <begin position="69"/>
        <end position="80"/>
    </location>
</feature>
<feature type="strand" evidence="7">
    <location>
        <begin position="83"/>
        <end position="92"/>
    </location>
</feature>
<feature type="turn" evidence="7">
    <location>
        <begin position="93"/>
        <end position="96"/>
    </location>
</feature>
<feature type="strand" evidence="7">
    <location>
        <begin position="97"/>
        <end position="110"/>
    </location>
</feature>
<feature type="turn" evidence="7">
    <location>
        <begin position="111"/>
        <end position="113"/>
    </location>
</feature>
<feature type="strand" evidence="7">
    <location>
        <begin position="115"/>
        <end position="117"/>
    </location>
</feature>
<feature type="turn" evidence="7">
    <location>
        <begin position="121"/>
        <end position="124"/>
    </location>
</feature>
<feature type="helix" evidence="7">
    <location>
        <begin position="125"/>
        <end position="131"/>
    </location>
</feature>
<organism>
    <name type="scientific">Escherichia coli (strain K12)</name>
    <dbReference type="NCBI Taxonomy" id="83333"/>
    <lineage>
        <taxon>Bacteria</taxon>
        <taxon>Pseudomonadati</taxon>
        <taxon>Pseudomonadota</taxon>
        <taxon>Gammaproteobacteria</taxon>
        <taxon>Enterobacterales</taxon>
        <taxon>Enterobacteriaceae</taxon>
        <taxon>Escherichia</taxon>
    </lineage>
</organism>
<name>FADM_ECOLI</name>
<gene>
    <name evidence="5" type="primary">fadM</name>
    <name type="synonym">tesC</name>
    <name type="synonym">ybaW</name>
    <name type="ordered locus">b0443</name>
    <name type="ordered locus">JW0433</name>
</gene>
<evidence type="ECO:0000255" key="1"/>
<evidence type="ECO:0000269" key="2">
    <source>
    </source>
</evidence>
<evidence type="ECO:0000269" key="3">
    <source>
    </source>
</evidence>
<evidence type="ECO:0000303" key="4">
    <source>
    </source>
</evidence>
<evidence type="ECO:0000303" key="5">
    <source>
    </source>
</evidence>
<evidence type="ECO:0000305" key="6"/>
<evidence type="ECO:0007829" key="7">
    <source>
        <dbReference type="PDB" id="1NJK"/>
    </source>
</evidence>
<protein>
    <recommendedName>
        <fullName>Long-chain acyl-CoA thioesterase FadM</fullName>
        <ecNumber evidence="2">3.1.2.-</ecNumber>
    </recommendedName>
    <alternativeName>
        <fullName>Acyl-CoA thioester hydrolase</fullName>
    </alternativeName>
    <alternativeName>
        <fullName>Thioesterase 3</fullName>
    </alternativeName>
    <alternativeName>
        <fullName evidence="4">Thioesterase III</fullName>
    </alternativeName>
</protein>
<reference key="1">
    <citation type="submission" date="1996-10" db="EMBL/GenBank/DDBJ databases">
        <authorList>
            <person name="Hatada E."/>
            <person name="Ohmori H."/>
            <person name="Qiao Y."/>
            <person name="Tsuji M."/>
            <person name="Fukuda R."/>
        </authorList>
    </citation>
    <scope>NUCLEOTIDE SEQUENCE [GENOMIC DNA]</scope>
    <source>
        <strain>K12 / W3110 / ATCC 27325 / DSM 5911</strain>
    </source>
</reference>
<reference key="2">
    <citation type="submission" date="1997-01" db="EMBL/GenBank/DDBJ databases">
        <title>Sequence of minutes 4-25 of Escherichia coli.</title>
        <authorList>
            <person name="Chung E."/>
            <person name="Allen E."/>
            <person name="Araujo R."/>
            <person name="Aparicio A.M."/>
            <person name="Davis K."/>
            <person name="Duncan M."/>
            <person name="Federspiel N."/>
            <person name="Hyman R."/>
            <person name="Kalman S."/>
            <person name="Komp C."/>
            <person name="Kurdi O."/>
            <person name="Lew H."/>
            <person name="Lin D."/>
            <person name="Namath A."/>
            <person name="Oefner P."/>
            <person name="Roberts D."/>
            <person name="Schramm S."/>
            <person name="Davis R.W."/>
        </authorList>
    </citation>
    <scope>NUCLEOTIDE SEQUENCE [LARGE SCALE GENOMIC DNA]</scope>
    <source>
        <strain>K12 / MG1655 / ATCC 47076</strain>
    </source>
</reference>
<reference key="3">
    <citation type="journal article" date="1997" name="Science">
        <title>The complete genome sequence of Escherichia coli K-12.</title>
        <authorList>
            <person name="Blattner F.R."/>
            <person name="Plunkett G. III"/>
            <person name="Bloch C.A."/>
            <person name="Perna N.T."/>
            <person name="Burland V."/>
            <person name="Riley M."/>
            <person name="Collado-Vides J."/>
            <person name="Glasner J.D."/>
            <person name="Rode C.K."/>
            <person name="Mayhew G.F."/>
            <person name="Gregor J."/>
            <person name="Davis N.W."/>
            <person name="Kirkpatrick H.A."/>
            <person name="Goeden M.A."/>
            <person name="Rose D.J."/>
            <person name="Mau B."/>
            <person name="Shao Y."/>
        </authorList>
    </citation>
    <scope>NUCLEOTIDE SEQUENCE [LARGE SCALE GENOMIC DNA]</scope>
    <source>
        <strain>K12 / MG1655 / ATCC 47076</strain>
    </source>
</reference>
<reference key="4">
    <citation type="journal article" date="2006" name="Mol. Syst. Biol.">
        <title>Highly accurate genome sequences of Escherichia coli K-12 strains MG1655 and W3110.</title>
        <authorList>
            <person name="Hayashi K."/>
            <person name="Morooka N."/>
            <person name="Yamamoto Y."/>
            <person name="Fujita K."/>
            <person name="Isono K."/>
            <person name="Choi S."/>
            <person name="Ohtsubo E."/>
            <person name="Baba T."/>
            <person name="Wanner B.L."/>
            <person name="Mori H."/>
            <person name="Horiuchi T."/>
        </authorList>
    </citation>
    <scope>NUCLEOTIDE SEQUENCE [LARGE SCALE GENOMIC DNA]</scope>
    <source>
        <strain>K12 / W3110 / ATCC 27325 / DSM 5911</strain>
    </source>
</reference>
<reference key="5">
    <citation type="journal article" date="2008" name="Biochemistry">
        <title>Identification and characterization of Escherichia coli thioesterase III that functions in fatty acid beta-oxidation.</title>
        <authorList>
            <person name="Nie L."/>
            <person name="Ren Y."/>
            <person name="Schulz H."/>
        </authorList>
    </citation>
    <scope>FUNCTION</scope>
    <scope>CATALYTIC ACTIVITY</scope>
    <scope>BIOPHYSICOCHEMICAL PROPERTIES</scope>
    <scope>IDENTIFICATION BY MASS SPECTROMETRY</scope>
    <scope>INDUCTION</scope>
</reference>
<reference key="6">
    <citation type="journal article" date="2009" name="J. Bacteriol.">
        <title>A new member of the Escherichia coli fad regulon: transcriptional regulation of fadM (ybaW).</title>
        <authorList>
            <person name="Feng Y."/>
            <person name="Cronan J.E."/>
        </authorList>
    </citation>
    <scope>INDUCTION</scope>
    <scope>GENE NAME</scope>
    <source>
        <strain>K12</strain>
    </source>
</reference>
<reference key="7">
    <citation type="submission" date="2005-01" db="PDB data bank">
        <title>Crystal structure of Escherichia coli hypothetical protein Ybaw.</title>
        <authorList>
            <consortium name="Midwest center for structural genomics (MCSG)"/>
        </authorList>
    </citation>
    <scope>X-RAY CRYSTALLOGRAPHY (1.9 ANGSTROMS)</scope>
    <scope>SUBUNIT</scope>
</reference>
<dbReference type="EC" id="3.1.2.-" evidence="2"/>
<dbReference type="EMBL" id="D82943">
    <property type="protein sequence ID" value="BAA11647.1"/>
    <property type="molecule type" value="Genomic_DNA"/>
</dbReference>
<dbReference type="EMBL" id="U82664">
    <property type="protein sequence ID" value="AAB40199.1"/>
    <property type="molecule type" value="Genomic_DNA"/>
</dbReference>
<dbReference type="EMBL" id="U00096">
    <property type="protein sequence ID" value="AAC73546.1"/>
    <property type="molecule type" value="Genomic_DNA"/>
</dbReference>
<dbReference type="EMBL" id="AP009048">
    <property type="protein sequence ID" value="BAE76223.1"/>
    <property type="molecule type" value="Genomic_DNA"/>
</dbReference>
<dbReference type="PIR" id="C64774">
    <property type="entry name" value="C64774"/>
</dbReference>
<dbReference type="RefSeq" id="NP_414977.1">
    <property type="nucleotide sequence ID" value="NC_000913.3"/>
</dbReference>
<dbReference type="RefSeq" id="WP_001194534.1">
    <property type="nucleotide sequence ID" value="NZ_STEB01000007.1"/>
</dbReference>
<dbReference type="PDB" id="1NJK">
    <property type="method" value="X-ray"/>
    <property type="resolution" value="1.90 A"/>
    <property type="chains" value="A/B/C/D=1-132"/>
</dbReference>
<dbReference type="PDBsum" id="1NJK"/>
<dbReference type="SMR" id="P77712"/>
<dbReference type="BioGRID" id="4259836">
    <property type="interactions" value="166"/>
</dbReference>
<dbReference type="FunCoup" id="P77712">
    <property type="interactions" value="19"/>
</dbReference>
<dbReference type="IntAct" id="P77712">
    <property type="interactions" value="4"/>
</dbReference>
<dbReference type="STRING" id="511145.b0443"/>
<dbReference type="SwissLipids" id="SLP:000001801"/>
<dbReference type="jPOST" id="P77712"/>
<dbReference type="PaxDb" id="511145-b0443"/>
<dbReference type="EnsemblBacteria" id="AAC73546">
    <property type="protein sequence ID" value="AAC73546"/>
    <property type="gene ID" value="b0443"/>
</dbReference>
<dbReference type="GeneID" id="93777007"/>
<dbReference type="GeneID" id="945812"/>
<dbReference type="KEGG" id="ecj:JW0433"/>
<dbReference type="KEGG" id="eco:b0443"/>
<dbReference type="KEGG" id="ecoc:C3026_02170"/>
<dbReference type="PATRIC" id="fig|1411691.4.peg.1833"/>
<dbReference type="EchoBASE" id="EB3040"/>
<dbReference type="eggNOG" id="COG0824">
    <property type="taxonomic scope" value="Bacteria"/>
</dbReference>
<dbReference type="HOGENOM" id="CLU_101141_4_2_6"/>
<dbReference type="InParanoid" id="P77712"/>
<dbReference type="OMA" id="HIDLFQH"/>
<dbReference type="OrthoDB" id="9799036at2"/>
<dbReference type="PhylomeDB" id="P77712"/>
<dbReference type="BioCyc" id="EcoCyc:G6244-MONOMER"/>
<dbReference type="BioCyc" id="MetaCyc:G6244-MONOMER"/>
<dbReference type="BRENDA" id="3.1.2.20">
    <property type="organism ID" value="2026"/>
</dbReference>
<dbReference type="EvolutionaryTrace" id="P77712"/>
<dbReference type="PRO" id="PR:P77712"/>
<dbReference type="Proteomes" id="UP000000625">
    <property type="component" value="Chromosome"/>
</dbReference>
<dbReference type="GO" id="GO:0047617">
    <property type="term" value="F:fatty acyl-CoA hydrolase activity"/>
    <property type="evidence" value="ECO:0000314"/>
    <property type="project" value="EcoCyc"/>
</dbReference>
<dbReference type="GO" id="GO:0006635">
    <property type="term" value="P:fatty acid beta-oxidation"/>
    <property type="evidence" value="ECO:0000270"/>
    <property type="project" value="EcoCyc"/>
</dbReference>
<dbReference type="CDD" id="cd00586">
    <property type="entry name" value="4HBT"/>
    <property type="match status" value="1"/>
</dbReference>
<dbReference type="FunFam" id="3.10.129.10:FF:000006">
    <property type="entry name" value="YbgC/FadM family acyl-CoA thioesterase"/>
    <property type="match status" value="1"/>
</dbReference>
<dbReference type="Gene3D" id="3.10.129.10">
    <property type="entry name" value="Hotdog Thioesterase"/>
    <property type="match status" value="1"/>
</dbReference>
<dbReference type="InterPro" id="IPR050563">
    <property type="entry name" value="4-hydroxybenzoyl-CoA_TE"/>
</dbReference>
<dbReference type="InterPro" id="IPR029069">
    <property type="entry name" value="HotDog_dom_sf"/>
</dbReference>
<dbReference type="InterPro" id="IPR006684">
    <property type="entry name" value="YbgC/YbaW"/>
</dbReference>
<dbReference type="NCBIfam" id="TIGR00051">
    <property type="entry name" value="YbgC/FadM family acyl-CoA thioesterase"/>
    <property type="match status" value="1"/>
</dbReference>
<dbReference type="PANTHER" id="PTHR31793">
    <property type="entry name" value="4-HYDROXYBENZOYL-COA THIOESTERASE FAMILY MEMBER"/>
    <property type="match status" value="1"/>
</dbReference>
<dbReference type="PANTHER" id="PTHR31793:SF24">
    <property type="entry name" value="LONG-CHAIN ACYL-COA THIOESTERASE FADM"/>
    <property type="match status" value="1"/>
</dbReference>
<dbReference type="Pfam" id="PF13279">
    <property type="entry name" value="4HBT_2"/>
    <property type="match status" value="1"/>
</dbReference>
<dbReference type="PIRSF" id="PIRSF003230">
    <property type="entry name" value="YbgC"/>
    <property type="match status" value="1"/>
</dbReference>
<dbReference type="SUPFAM" id="SSF54637">
    <property type="entry name" value="Thioesterase/thiol ester dehydrase-isomerase"/>
    <property type="match status" value="1"/>
</dbReference>
<sequence>MQTQIKVRGYHLDVYQHVNNARYLEFLEEARWDGLENSDSFQWMTAHNIAFVVVNININYRRPAVLSDLLTITSQLQQLNGKSGILSQVITLEPEGQVVADALITFVCIDLKTQKALALEGELREKLEQMVK</sequence>
<keyword id="KW-0002">3D-structure</keyword>
<keyword id="KW-0378">Hydrolase</keyword>
<keyword id="KW-1185">Reference proteome</keyword>
<proteinExistence type="evidence at protein level"/>
<accession>P77712</accession>
<accession>Q2MBY3</accession>